<name>CDK1_CANAL</name>
<feature type="chain" id="PRO_0000085721" description="Cyclin-dependent kinase 1">
    <location>
        <begin position="1"/>
        <end position="317"/>
    </location>
</feature>
<feature type="domain" description="Protein kinase" evidence="6">
    <location>
        <begin position="7"/>
        <end position="292"/>
    </location>
</feature>
<feature type="region of interest" description="Disordered" evidence="8">
    <location>
        <begin position="296"/>
        <end position="317"/>
    </location>
</feature>
<feature type="active site" description="Proton acceptor" evidence="6 7">
    <location>
        <position position="133"/>
    </location>
</feature>
<feature type="binding site" evidence="6">
    <location>
        <begin position="13"/>
        <end position="21"/>
    </location>
    <ligand>
        <name>ATP</name>
        <dbReference type="ChEBI" id="CHEBI:30616"/>
    </ligand>
</feature>
<feature type="binding site" evidence="6">
    <location>
        <position position="37"/>
    </location>
    <ligand>
        <name>ATP</name>
        <dbReference type="ChEBI" id="CHEBI:30616"/>
    </ligand>
</feature>
<feature type="modified residue" description="Phosphothreonine" evidence="1">
    <location>
        <position position="17"/>
    </location>
</feature>
<feature type="modified residue" description="Phosphotyrosine; by SWE1" evidence="9 11">
    <location>
        <position position="18"/>
    </location>
</feature>
<feature type="modified residue" description="Phosphothreonine; by CAK" evidence="1">
    <location>
        <position position="166"/>
    </location>
</feature>
<evidence type="ECO:0000250" key="1"/>
<evidence type="ECO:0000250" key="2">
    <source>
        <dbReference type="UniProtKB" id="P00546"/>
    </source>
</evidence>
<evidence type="ECO:0000250" key="3">
    <source>
        <dbReference type="UniProtKB" id="P04551"/>
    </source>
</evidence>
<evidence type="ECO:0000250" key="4">
    <source>
        <dbReference type="UniProtKB" id="P06493"/>
    </source>
</evidence>
<evidence type="ECO:0000250" key="5">
    <source>
        <dbReference type="UniProtKB" id="P24941"/>
    </source>
</evidence>
<evidence type="ECO:0000255" key="6">
    <source>
        <dbReference type="PROSITE-ProRule" id="PRU00159"/>
    </source>
</evidence>
<evidence type="ECO:0000255" key="7">
    <source>
        <dbReference type="PROSITE-ProRule" id="PRU10027"/>
    </source>
</evidence>
<evidence type="ECO:0000256" key="8">
    <source>
        <dbReference type="SAM" id="MobiDB-lite"/>
    </source>
</evidence>
<evidence type="ECO:0000269" key="9">
    <source>
    </source>
</evidence>
<evidence type="ECO:0000269" key="10">
    <source>
    </source>
</evidence>
<evidence type="ECO:0000269" key="11">
    <source>
    </source>
</evidence>
<evidence type="ECO:0000269" key="12">
    <source>
    </source>
</evidence>
<evidence type="ECO:0000269" key="13">
    <source>
    </source>
</evidence>
<evidence type="ECO:0000269" key="14">
    <source>
    </source>
</evidence>
<evidence type="ECO:0000269" key="15">
    <source>
    </source>
</evidence>
<evidence type="ECO:0000269" key="16">
    <source>
    </source>
</evidence>
<evidence type="ECO:0000269" key="17">
    <source>
    </source>
</evidence>
<evidence type="ECO:0000269" key="18">
    <source>
    </source>
</evidence>
<evidence type="ECO:0000269" key="19">
    <source>
    </source>
</evidence>
<evidence type="ECO:0000269" key="20">
    <source>
    </source>
</evidence>
<evidence type="ECO:0000269" key="21">
    <source>
    </source>
</evidence>
<evidence type="ECO:0000269" key="22">
    <source>
    </source>
</evidence>
<evidence type="ECO:0000269" key="23">
    <source>
    </source>
</evidence>
<evidence type="ECO:0000269" key="24">
    <source>
    </source>
</evidence>
<evidence type="ECO:0000269" key="25">
    <source>
    </source>
</evidence>
<evidence type="ECO:0000303" key="26">
    <source>
    </source>
</evidence>
<evidence type="ECO:0000305" key="27"/>
<keyword id="KW-0067">ATP-binding</keyword>
<keyword id="KW-0131">Cell cycle</keyword>
<keyword id="KW-0132">Cell division</keyword>
<keyword id="KW-0418">Kinase</keyword>
<keyword id="KW-0498">Mitosis</keyword>
<keyword id="KW-0547">Nucleotide-binding</keyword>
<keyword id="KW-0597">Phosphoprotein</keyword>
<keyword id="KW-1185">Reference proteome</keyword>
<keyword id="KW-0723">Serine/threonine-protein kinase</keyword>
<keyword id="KW-0808">Transferase</keyword>
<protein>
    <recommendedName>
        <fullName evidence="2">Cyclin-dependent kinase 1</fullName>
        <shortName evidence="2">CDK1</shortName>
        <ecNumber evidence="3">2.7.11.22</ecNumber>
    </recommendedName>
    <alternativeName>
        <fullName>Cell division control protein 28</fullName>
    </alternativeName>
    <alternativeName>
        <fullName>Cell division protein kinase 2</fullName>
    </alternativeName>
</protein>
<accession>P43063</accession>
<accession>A0A1D8PT63</accession>
<accession>Q59V96</accession>
<reference key="1">
    <citation type="journal article" date="1994" name="Mol. Gen. Genet.">
        <title>Molecular cloning and analysis of CDC28 and cyclin homologues from the human fungal pathogen Candida albicans.</title>
        <authorList>
            <person name="Sherlock G."/>
            <person name="Bahman A.M."/>
            <person name="Mahal A."/>
            <person name="Shieh J.C."/>
            <person name="Ferreira M."/>
            <person name="Rosamond J."/>
        </authorList>
    </citation>
    <scope>NUCLEOTIDE SEQUENCE [GENOMIC DNA]</scope>
    <scope>FUNCTION</scope>
    <source>
        <strain>SGY126</strain>
    </source>
</reference>
<reference key="2">
    <citation type="journal article" date="1996" name="Gene">
        <title>Candida albicans CDK1 and CYB1: cDNA homologues of the cdc2/CDC28 and cdc13/CLB1/CLB2 cell cycle control genes.</title>
        <authorList>
            <person name="Damagnez V."/>
            <person name="Cottarel G."/>
        </authorList>
    </citation>
    <scope>NUCLEOTIDE SEQUENCE [MRNA]</scope>
</reference>
<reference key="3">
    <citation type="journal article" date="2004" name="Proc. Natl. Acad. Sci. U.S.A.">
        <title>The diploid genome sequence of Candida albicans.</title>
        <authorList>
            <person name="Jones T."/>
            <person name="Federspiel N.A."/>
            <person name="Chibana H."/>
            <person name="Dungan J."/>
            <person name="Kalman S."/>
            <person name="Magee B.B."/>
            <person name="Newport G."/>
            <person name="Thorstenson Y.R."/>
            <person name="Agabian N."/>
            <person name="Magee P.T."/>
            <person name="Davis R.W."/>
            <person name="Scherer S."/>
        </authorList>
    </citation>
    <scope>NUCLEOTIDE SEQUENCE [LARGE SCALE GENOMIC DNA]</scope>
    <source>
        <strain>SC5314 / ATCC MYA-2876</strain>
    </source>
</reference>
<reference key="4">
    <citation type="journal article" date="2007" name="Genome Biol.">
        <title>Assembly of the Candida albicans genome into sixteen supercontigs aligned on the eight chromosomes.</title>
        <authorList>
            <person name="van het Hoog M."/>
            <person name="Rast T.J."/>
            <person name="Martchenko M."/>
            <person name="Grindle S."/>
            <person name="Dignard D."/>
            <person name="Hogues H."/>
            <person name="Cuomo C."/>
            <person name="Berriman M."/>
            <person name="Scherer S."/>
            <person name="Magee B.B."/>
            <person name="Whiteway M."/>
            <person name="Chibana H."/>
            <person name="Nantel A."/>
            <person name="Magee P.T."/>
        </authorList>
    </citation>
    <scope>GENOME REANNOTATION</scope>
    <source>
        <strain>SC5314 / ATCC MYA-2876</strain>
    </source>
</reference>
<reference key="5">
    <citation type="journal article" date="2013" name="Genome Biol.">
        <title>Assembly of a phased diploid Candida albicans genome facilitates allele-specific measurements and provides a simple model for repeat and indel structure.</title>
        <authorList>
            <person name="Muzzey D."/>
            <person name="Schwartz K."/>
            <person name="Weissman J.S."/>
            <person name="Sherlock G."/>
        </authorList>
    </citation>
    <scope>NUCLEOTIDE SEQUENCE [LARGE SCALE GENOMIC DNA]</scope>
    <scope>GENOME REANNOTATION</scope>
    <source>
        <strain>SC5314 / ATCC MYA-2876</strain>
    </source>
</reference>
<reference key="6">
    <citation type="journal article" date="2002" name="Mol. Biol. Cell">
        <title>Hyphal elongation is regulated independently of cell cycle in Candida albicans.</title>
        <authorList>
            <person name="Hazan I."/>
            <person name="Sepulveda-Becerra M."/>
            <person name="Liu H."/>
        </authorList>
    </citation>
    <scope>FUNCTION</scope>
    <scope>PHOSPHORYLATION AT TYR-18</scope>
</reference>
<reference key="7">
    <citation type="journal article" date="2004" name="EMBO J.">
        <title>Hgc1, a novel hypha-specific G1 cyclin-related protein regulates Candida albicans hyphal morphogenesis.</title>
        <authorList>
            <person name="Zheng X."/>
            <person name="Wang Y."/>
            <person name="Wang Y."/>
        </authorList>
    </citation>
    <scope>FUNCTION</scope>
    <scope>INTERACTION WITH HGC1</scope>
</reference>
<reference key="8">
    <citation type="journal article" date="2005" name="Mol. Microbiol.">
        <title>Candida albicans protein kinase CaHsl1p regulates cell elongation and virulence.</title>
        <authorList>
            <person name="Umeyama T."/>
            <person name="Kaneko A."/>
            <person name="Nagai Y."/>
            <person name="Hanaoka N."/>
            <person name="Tanabe K."/>
            <person name="Takano Y."/>
            <person name="Niimi M."/>
            <person name="Uehara Y."/>
        </authorList>
    </citation>
    <scope>PHOSPHORYLATION AT TYR-18 BY SWE1</scope>
    <scope>FUNCTION</scope>
</reference>
<reference key="9">
    <citation type="journal article" date="2006" name="Yeast">
        <title>Repression of CDC28 reduces the expression of the morphology-related transcription factors, Efg1p, Nrg1p, Rbf1p, Rim101p, Fkh2p and Tec1p and induces cell elongation in Candida albicans.</title>
        <authorList>
            <person name="Umeyama T."/>
            <person name="Kaneko A."/>
            <person name="Niimi M."/>
            <person name="Uehara Y."/>
        </authorList>
    </citation>
    <scope>FUNCTION</scope>
</reference>
<reference key="10">
    <citation type="journal article" date="2007" name="EMBO J.">
        <title>Phosphorylation of Rga2, a Cdc42 GAP, by CDK/Hgc1 is crucial for Candida albicans hyphal growth.</title>
        <authorList>
            <person name="Zheng X.D."/>
            <person name="Lee R.T."/>
            <person name="Wang Y.M."/>
            <person name="Lin Q.S."/>
            <person name="Wang Y."/>
        </authorList>
    </citation>
    <scope>FUNCTION IN PHOSPHORYLATION OF RGA2</scope>
</reference>
<reference key="11">
    <citation type="journal article" date="2007" name="Dev. Cell">
        <title>Cyclin-dependent kinases control septin phosphorylation in Candida albicans hyphal development.</title>
        <authorList>
            <person name="Sinha I."/>
            <person name="Wang Y.M."/>
            <person name="Philp R."/>
            <person name="Li C.R."/>
            <person name="Yap W.H."/>
            <person name="Wang Y."/>
        </authorList>
    </citation>
    <scope>INTERACTION WITH HGC1; CCN1 AND CDC11</scope>
    <scope>FUNCTION IN PHOSPHORYLATION OF CDC11</scope>
</reference>
<reference key="12">
    <citation type="journal article" date="2007" name="Mol. Microbiol.">
        <title>Defining Candida albicans stationary phase by cellular and DNA replication, gene expression and regulation.</title>
        <authorList>
            <person name="Uppuluri P."/>
            <person name="Chaffin W.L."/>
        </authorList>
    </citation>
    <scope>INDUCTION</scope>
</reference>
<reference key="13">
    <citation type="journal article" date="2008" name="EMBO J.">
        <title>The IQGAP Iqg1 is a regulatory target of CDK for cytokinesis in Candida albicans.</title>
        <authorList>
            <person name="Li C.R."/>
            <person name="Wang Y.M."/>
            <person name="Wang Y."/>
        </authorList>
    </citation>
    <scope>INTERACTION WITH CLB2 AND IQG1</scope>
    <scope>FUNCTION IN PHOSPHORYLATION OF IQG1</scope>
</reference>
<reference key="14">
    <citation type="journal article" date="2009" name="Mol. Cell. Biol.">
        <title>Hyphal chain formation in Candida albicans: Cdc28-Hgc1 phosphorylation of Efg1 represses cell separation genes.</title>
        <authorList>
            <person name="Wang A."/>
            <person name="Raniga P.P."/>
            <person name="Lane S."/>
            <person name="Lu Y."/>
            <person name="Liu H."/>
        </authorList>
    </citation>
    <scope>FUNCTION IN PHOSPHORYLATION OF EFG1</scope>
</reference>
<reference key="15">
    <citation type="journal article" date="2010" name="Biochim. Biophys. Acta">
        <title>Plagiochin E, an antifungal active macrocyclic bis(bibenzyl), induced apoptosis in Candida albicans through a metacaspase-dependent apoptotic pathway.</title>
        <authorList>
            <person name="Wu X.Z."/>
            <person name="Chang W.Q."/>
            <person name="Cheng A.X."/>
            <person name="Sun L.M."/>
            <person name="Lou H.X."/>
        </authorList>
    </citation>
    <scope>INDUCTION</scope>
</reference>
<reference key="16">
    <citation type="journal article" date="2010" name="EMBO J.">
        <title>Hyphal growth in Candida albicans requires the phosphorylation of Sec2 by the Cdc28-Ccn1/Hgc1 kinase.</title>
        <authorList>
            <person name="Bishop A."/>
            <person name="Lane R."/>
            <person name="Beniston R."/>
            <person name="Chapa-y-Lazo B."/>
            <person name="Smythe C."/>
            <person name="Sudbery P."/>
        </authorList>
    </citation>
    <scope>FUNCTION IN PHOSPHORYLATION OF SEC2</scope>
</reference>
<reference key="17">
    <citation type="journal article" date="2011" name="Mol. Biol. Cell">
        <title>CDK-dependent phosphorylation of Mob2 is essential for hyphal development in Candida albicans.</title>
        <authorList>
            <person name="Gutierrez-Escribano P."/>
            <person name="Gonzalez-Novo A."/>
            <person name="Suarez M.B."/>
            <person name="Li C.R."/>
            <person name="Wang Y."/>
            <person name="de Aldana C.R."/>
            <person name="Correa-Bordes J."/>
        </authorList>
    </citation>
    <scope>FUNCTION IN PHOSPHORYLATION OF MOB2</scope>
</reference>
<reference key="18">
    <citation type="journal article" date="2012" name="J. Cell Sci.">
        <title>CDK regulates septin organization through cell-cycle-dependent phosphorylation of the Nim1-related kinase Gin4.</title>
        <authorList>
            <person name="Li C.R."/>
            <person name="Yong J.Y."/>
            <person name="Wang Y.M."/>
            <person name="Wang Y."/>
        </authorList>
    </citation>
    <scope>FUNCTION IN PHOSPHORYLATION OF GIN4</scope>
</reference>
<reference key="19">
    <citation type="journal article" date="2012" name="Mol. Biol. Cell">
        <title>Cdc28 provides a molecular link between Hsp90, morphogenesis, and cell cycle progression in Candida albicans.</title>
        <authorList>
            <person name="Senn H."/>
            <person name="Shapiro R.S."/>
            <person name="Cowen L.E."/>
        </authorList>
    </citation>
    <scope>FUNCTION</scope>
    <scope>INTERACTION WITH HSP90</scope>
</reference>
<reference key="20">
    <citation type="journal article" date="2012" name="Mol. Biol. Cell">
        <title>Cdc28-Cln3 phosphorylation of Sla1 regulates actin patch dynamics in different modes of fungal growth.</title>
        <authorList>
            <person name="Zeng G."/>
            <person name="Wang Y.M."/>
            <person name="Wang Y."/>
        </authorList>
    </citation>
    <scope>INTERACTION WITH CLN3</scope>
    <scope>FUNCTION IN PHOSPHORYLATION OF SLA1</scope>
</reference>
<reference key="21">
    <citation type="journal article" date="2013" name="Biochem. J.">
        <title>Rfa2 is specifically dephosphorylated by Pph3 in Candida albicans.</title>
        <authorList>
            <person name="Wang H."/>
            <person name="Gao J."/>
            <person name="Wong A.H."/>
            <person name="Hu K."/>
            <person name="Li W."/>
            <person name="Wang Y."/>
            <person name="Sang J."/>
        </authorList>
    </citation>
    <scope>INTERACTION WITH RFA2</scope>
    <scope>FUNCTION IN PHOSPHORYLATION OF RFA2</scope>
</reference>
<organism>
    <name type="scientific">Candida albicans (strain SC5314 / ATCC MYA-2876)</name>
    <name type="common">Yeast</name>
    <dbReference type="NCBI Taxonomy" id="237561"/>
    <lineage>
        <taxon>Eukaryota</taxon>
        <taxon>Fungi</taxon>
        <taxon>Dikarya</taxon>
        <taxon>Ascomycota</taxon>
        <taxon>Saccharomycotina</taxon>
        <taxon>Pichiomycetes</taxon>
        <taxon>Debaryomycetaceae</taxon>
        <taxon>Candida/Lodderomyces clade</taxon>
        <taxon>Candida</taxon>
    </lineage>
</organism>
<proteinExistence type="evidence at protein level"/>
<comment type="function">
    <text evidence="3 9 10 11 12 14 15 16 17 19 20 21 22 23 24 25">Cyclin-dependent kinase that acts as a master regulator of the mitotic and meiotic cell cycles (By similarity). May drive the G1-S transition (PubMed:7830719). Plays a role in mitotic exit (PubMed:22090345). Plays a role in the expression of morphology-related transcription factors, and especially hyphae-specific genes (PubMed:11809828, PubMed:15659158, PubMed:16710830). Binds distinct cyclin subunits as cells progress through the division cycle or flamentous growth (PubMed:15071502, PubMed:17765684, PubMed:18923418, PubMed:22787279). The CDC28-CLB2 complex regulates cytokinesis partly by phosphorylating the actomyosin ring component IQG1 (PubMed:18923418). The CDC28-CLN3 complex phosphorylates SLA1 which regulates cortical actin patch dynamics (PubMed:22787279). The CDC28-CCN1 complex phosphorylates CDC11 and SEC2 upon induction of filamentous growth (PubMed:17765684). The CDC28-HGC1 complex also phosphorylates SEC2 and maintains CDC11 phosphorylation throughout hyphal growth (PubMed:20639857). Moreover, the CDC28-HGC1 complex phosphorylates and prevents RGA2 from localizing to hyphal tips, leading to localized CDC42 activation for hyphal extension (PubMed:17673907). CDC28-HGC1 phosphorylation of EFG1 represses cell separation genes during hyphal growth (PubMed:19528234). Additional substrates for CDC28 are RFA2 in G1-phase; MOB2, which is required for the maintenance of polarisome components and for inhibition of cell separation in hyphae; and GIN4 to regulate its association to SEP7 and subsequent septin ring assembly (PubMed:21593210, PubMed:22366454, PubMed:23140133).</text>
</comment>
<comment type="catalytic activity">
    <reaction evidence="5">
        <text>L-seryl-[protein] + ATP = O-phospho-L-seryl-[protein] + ADP + H(+)</text>
        <dbReference type="Rhea" id="RHEA:17989"/>
        <dbReference type="Rhea" id="RHEA-COMP:9863"/>
        <dbReference type="Rhea" id="RHEA-COMP:11604"/>
        <dbReference type="ChEBI" id="CHEBI:15378"/>
        <dbReference type="ChEBI" id="CHEBI:29999"/>
        <dbReference type="ChEBI" id="CHEBI:30616"/>
        <dbReference type="ChEBI" id="CHEBI:83421"/>
        <dbReference type="ChEBI" id="CHEBI:456216"/>
        <dbReference type="EC" id="2.7.11.22"/>
    </reaction>
</comment>
<comment type="catalytic activity">
    <reaction evidence="3">
        <text>L-threonyl-[protein] + ATP = O-phospho-L-threonyl-[protein] + ADP + H(+)</text>
        <dbReference type="Rhea" id="RHEA:46608"/>
        <dbReference type="Rhea" id="RHEA-COMP:11060"/>
        <dbReference type="Rhea" id="RHEA-COMP:11605"/>
        <dbReference type="ChEBI" id="CHEBI:15378"/>
        <dbReference type="ChEBI" id="CHEBI:30013"/>
        <dbReference type="ChEBI" id="CHEBI:30616"/>
        <dbReference type="ChEBI" id="CHEBI:61977"/>
        <dbReference type="ChEBI" id="CHEBI:456216"/>
        <dbReference type="EC" id="2.7.11.22"/>
    </reaction>
</comment>
<comment type="activity regulation">
    <text evidence="4">Phosphorylation at Thr-17 or Tyr-18 inactivates the enzyme, while phosphorylation at Thr-166 activates it.</text>
</comment>
<comment type="subunit">
    <text evidence="10 15 16 21 23 24">Forms several complexes with cyclins CCN1, CLB2, CLN3, and HGC1. The CDC28-CCN1 complex associates with septin CDC11 upon hyphal induction. Interacts with IQG1, RFA2, and HSP90.</text>
</comment>
<comment type="induction">
    <text evidence="13 18">Expression is increased during exponential growth and repressed by the antifungal drug plagiochin E (PLE).</text>
</comment>
<comment type="PTM">
    <text evidence="9 11">Phosphorylated at Tyr-18 by SWE1 in a cell cycle-dependent manner. Yeast-form and hyphal cells display similar dynamics of phosphorylation and dephosphorylation of Tyr-18. Tyr-18 phosphorylation leads to inhibition of CDC28 kinase activity.</text>
</comment>
<comment type="similarity">
    <text evidence="27">Belongs to the protein kinase superfamily. CMGC Ser/Thr protein kinase family. CDC2/CDKX subfamily.</text>
</comment>
<dbReference type="EC" id="2.7.11.22" evidence="3"/>
<dbReference type="EMBL" id="X80034">
    <property type="protein sequence ID" value="CAA56338.1"/>
    <property type="molecule type" value="Genomic_DNA"/>
</dbReference>
<dbReference type="EMBL" id="U40405">
    <property type="protein sequence ID" value="AAC49450.1"/>
    <property type="molecule type" value="mRNA"/>
</dbReference>
<dbReference type="EMBL" id="CP017630">
    <property type="protein sequence ID" value="AOW31316.1"/>
    <property type="molecule type" value="Genomic_DNA"/>
</dbReference>
<dbReference type="PIR" id="JC4827">
    <property type="entry name" value="JC4827"/>
</dbReference>
<dbReference type="RefSeq" id="XP_713486.1">
    <property type="nucleotide sequence ID" value="XM_708393.1"/>
</dbReference>
<dbReference type="SMR" id="P43063"/>
<dbReference type="BioGRID" id="1227914">
    <property type="interactions" value="19"/>
</dbReference>
<dbReference type="DIP" id="DIP-497N"/>
<dbReference type="FunCoup" id="P43063">
    <property type="interactions" value="1009"/>
</dbReference>
<dbReference type="IntAct" id="P43063">
    <property type="interactions" value="3"/>
</dbReference>
<dbReference type="MINT" id="P43063"/>
<dbReference type="STRING" id="237561.P43063"/>
<dbReference type="iPTMnet" id="P43063"/>
<dbReference type="EnsemblFungi" id="CR_06050W_A-T">
    <property type="protein sequence ID" value="CR_06050W_A-T-p1"/>
    <property type="gene ID" value="CR_06050W_A"/>
</dbReference>
<dbReference type="GeneID" id="3644838"/>
<dbReference type="KEGG" id="cal:CAALFM_CR06050WA"/>
<dbReference type="CGD" id="CAL0000191263">
    <property type="gene designation" value="CDC28"/>
</dbReference>
<dbReference type="VEuPathDB" id="FungiDB:CR_06050W_A"/>
<dbReference type="eggNOG" id="KOG0594">
    <property type="taxonomic scope" value="Eukaryota"/>
</dbReference>
<dbReference type="HOGENOM" id="CLU_000288_181_1_1"/>
<dbReference type="InParanoid" id="P43063"/>
<dbReference type="OMA" id="YLYQITR"/>
<dbReference type="OrthoDB" id="1732493at2759"/>
<dbReference type="BRENDA" id="2.7.11.22">
    <property type="organism ID" value="1096"/>
</dbReference>
<dbReference type="PRO" id="PR:P43063"/>
<dbReference type="Proteomes" id="UP000000559">
    <property type="component" value="Chromosome R"/>
</dbReference>
<dbReference type="GO" id="GO:0005935">
    <property type="term" value="C:cellular bud neck"/>
    <property type="evidence" value="ECO:0007669"/>
    <property type="project" value="EnsemblFungi"/>
</dbReference>
<dbReference type="GO" id="GO:0000307">
    <property type="term" value="C:cyclin-dependent protein kinase holoenzyme complex"/>
    <property type="evidence" value="ECO:0000318"/>
    <property type="project" value="GO_Central"/>
</dbReference>
<dbReference type="GO" id="GO:0005737">
    <property type="term" value="C:cytoplasm"/>
    <property type="evidence" value="ECO:0000318"/>
    <property type="project" value="GO_Central"/>
</dbReference>
<dbReference type="GO" id="GO:0005783">
    <property type="term" value="C:endoplasmic reticulum"/>
    <property type="evidence" value="ECO:0007669"/>
    <property type="project" value="EnsemblFungi"/>
</dbReference>
<dbReference type="GO" id="GO:0005634">
    <property type="term" value="C:nucleus"/>
    <property type="evidence" value="ECO:0000318"/>
    <property type="project" value="GO_Central"/>
</dbReference>
<dbReference type="GO" id="GO:0005524">
    <property type="term" value="F:ATP binding"/>
    <property type="evidence" value="ECO:0007669"/>
    <property type="project" value="UniProtKB-KW"/>
</dbReference>
<dbReference type="GO" id="GO:0030332">
    <property type="term" value="F:cyclin binding"/>
    <property type="evidence" value="ECO:0000318"/>
    <property type="project" value="GO_Central"/>
</dbReference>
<dbReference type="GO" id="GO:0004693">
    <property type="term" value="F:cyclin-dependent protein serine/threonine kinase activity"/>
    <property type="evidence" value="ECO:0000314"/>
    <property type="project" value="CGD"/>
</dbReference>
<dbReference type="GO" id="GO:0042393">
    <property type="term" value="F:histone binding"/>
    <property type="evidence" value="ECO:0007669"/>
    <property type="project" value="EnsemblFungi"/>
</dbReference>
<dbReference type="GO" id="GO:0004672">
    <property type="term" value="F:protein kinase activity"/>
    <property type="evidence" value="ECO:0000315"/>
    <property type="project" value="CGD"/>
</dbReference>
<dbReference type="GO" id="GO:0106310">
    <property type="term" value="F:protein serine kinase activity"/>
    <property type="evidence" value="ECO:0007669"/>
    <property type="project" value="RHEA"/>
</dbReference>
<dbReference type="GO" id="GO:0000993">
    <property type="term" value="F:RNA polymerase II complex binding"/>
    <property type="evidence" value="ECO:0007669"/>
    <property type="project" value="EnsemblFungi"/>
</dbReference>
<dbReference type="GO" id="GO:0006370">
    <property type="term" value="P:7-methylguanosine mRNA capping"/>
    <property type="evidence" value="ECO:0007669"/>
    <property type="project" value="EnsemblFungi"/>
</dbReference>
<dbReference type="GO" id="GO:0051301">
    <property type="term" value="P:cell division"/>
    <property type="evidence" value="ECO:0007669"/>
    <property type="project" value="UniProtKB-KW"/>
</dbReference>
<dbReference type="GO" id="GO:0006303">
    <property type="term" value="P:double-strand break repair via nonhomologous end joining"/>
    <property type="evidence" value="ECO:0007669"/>
    <property type="project" value="EnsemblFungi"/>
</dbReference>
<dbReference type="GO" id="GO:0000082">
    <property type="term" value="P:G1/S transition of mitotic cell cycle"/>
    <property type="evidence" value="ECO:0000314"/>
    <property type="project" value="CGD"/>
</dbReference>
<dbReference type="GO" id="GO:0000086">
    <property type="term" value="P:G2/M transition of mitotic cell cycle"/>
    <property type="evidence" value="ECO:0007669"/>
    <property type="project" value="EnsemblFungi"/>
</dbReference>
<dbReference type="GO" id="GO:0030448">
    <property type="term" value="P:hyphal growth"/>
    <property type="evidence" value="ECO:0000315"/>
    <property type="project" value="CGD"/>
</dbReference>
<dbReference type="GO" id="GO:0000706">
    <property type="term" value="P:meiotic DNA double-strand break processing"/>
    <property type="evidence" value="ECO:0007669"/>
    <property type="project" value="EnsemblFungi"/>
</dbReference>
<dbReference type="GO" id="GO:1990758">
    <property type="term" value="P:mitotic sister chromatid biorientation"/>
    <property type="evidence" value="ECO:0007669"/>
    <property type="project" value="EnsemblFungi"/>
</dbReference>
<dbReference type="GO" id="GO:0090307">
    <property type="term" value="P:mitotic spindle assembly"/>
    <property type="evidence" value="ECO:0007669"/>
    <property type="project" value="EnsemblFungi"/>
</dbReference>
<dbReference type="GO" id="GO:2001033">
    <property type="term" value="P:negative regulation of double-strand break repair via nonhomologous end joining"/>
    <property type="evidence" value="ECO:0007669"/>
    <property type="project" value="EnsemblFungi"/>
</dbReference>
<dbReference type="GO" id="GO:0060258">
    <property type="term" value="P:negative regulation of filamentous growth"/>
    <property type="evidence" value="ECO:0000315"/>
    <property type="project" value="CGD"/>
</dbReference>
<dbReference type="GO" id="GO:0051447">
    <property type="term" value="P:negative regulation of meiotic cell cycle"/>
    <property type="evidence" value="ECO:0007669"/>
    <property type="project" value="EnsemblFungi"/>
</dbReference>
<dbReference type="GO" id="GO:1903500">
    <property type="term" value="P:negative regulation of mitotic actomyosin contractile ring assembly"/>
    <property type="evidence" value="ECO:0007669"/>
    <property type="project" value="EnsemblFungi"/>
</dbReference>
<dbReference type="GO" id="GO:0045930">
    <property type="term" value="P:negative regulation of mitotic cell cycle"/>
    <property type="evidence" value="ECO:0007669"/>
    <property type="project" value="EnsemblFungi"/>
</dbReference>
<dbReference type="GO" id="GO:0045875">
    <property type="term" value="P:negative regulation of sister chromatid cohesion"/>
    <property type="evidence" value="ECO:0007669"/>
    <property type="project" value="EnsemblFungi"/>
</dbReference>
<dbReference type="GO" id="GO:0000122">
    <property type="term" value="P:negative regulation of transcription by RNA polymerase II"/>
    <property type="evidence" value="ECO:0007669"/>
    <property type="project" value="EnsemblFungi"/>
</dbReference>
<dbReference type="GO" id="GO:1905168">
    <property type="term" value="P:positive regulation of double-strand break repair via homologous recombination"/>
    <property type="evidence" value="ECO:0007669"/>
    <property type="project" value="EnsemblFungi"/>
</dbReference>
<dbReference type="GO" id="GO:0045819">
    <property type="term" value="P:positive regulation of glycogen catabolic process"/>
    <property type="evidence" value="ECO:0007669"/>
    <property type="project" value="EnsemblFungi"/>
</dbReference>
<dbReference type="GO" id="GO:0051446">
    <property type="term" value="P:positive regulation of meiotic cell cycle"/>
    <property type="evidence" value="ECO:0007669"/>
    <property type="project" value="EnsemblFungi"/>
</dbReference>
<dbReference type="GO" id="GO:0045931">
    <property type="term" value="P:positive regulation of mitotic cell cycle"/>
    <property type="evidence" value="ECO:0007669"/>
    <property type="project" value="EnsemblFungi"/>
</dbReference>
<dbReference type="GO" id="GO:1904291">
    <property type="term" value="P:positive regulation of mitotic DNA damage checkpoint"/>
    <property type="evidence" value="ECO:0007669"/>
    <property type="project" value="EnsemblFungi"/>
</dbReference>
<dbReference type="GO" id="GO:0010696">
    <property type="term" value="P:positive regulation of mitotic spindle pole body separation"/>
    <property type="evidence" value="ECO:0007669"/>
    <property type="project" value="EnsemblFungi"/>
</dbReference>
<dbReference type="GO" id="GO:0010571">
    <property type="term" value="P:positive regulation of nuclear cell cycle DNA replication"/>
    <property type="evidence" value="ECO:0007669"/>
    <property type="project" value="EnsemblFungi"/>
</dbReference>
<dbReference type="GO" id="GO:0045944">
    <property type="term" value="P:positive regulation of transcription by RNA polymerase II"/>
    <property type="evidence" value="ECO:0007669"/>
    <property type="project" value="EnsemblFungi"/>
</dbReference>
<dbReference type="GO" id="GO:1901319">
    <property type="term" value="P:positive regulation of trehalose catabolic process"/>
    <property type="evidence" value="ECO:0007669"/>
    <property type="project" value="EnsemblFungi"/>
</dbReference>
<dbReference type="GO" id="GO:0010898">
    <property type="term" value="P:positive regulation of triglyceride catabolic process"/>
    <property type="evidence" value="ECO:0007669"/>
    <property type="project" value="EnsemblFungi"/>
</dbReference>
<dbReference type="GO" id="GO:0006892">
    <property type="term" value="P:post-Golgi vesicle-mediated transport"/>
    <property type="evidence" value="ECO:0007669"/>
    <property type="project" value="EnsemblFungi"/>
</dbReference>
<dbReference type="GO" id="GO:0030163">
    <property type="term" value="P:protein catabolic process"/>
    <property type="evidence" value="ECO:0007669"/>
    <property type="project" value="EnsemblFungi"/>
</dbReference>
<dbReference type="GO" id="GO:1990139">
    <property type="term" value="P:protein localization to nuclear periphery"/>
    <property type="evidence" value="ECO:0007669"/>
    <property type="project" value="EnsemblFungi"/>
</dbReference>
<dbReference type="GO" id="GO:1902889">
    <property type="term" value="P:protein localization to spindle microtubule"/>
    <property type="evidence" value="ECO:0007669"/>
    <property type="project" value="EnsemblFungi"/>
</dbReference>
<dbReference type="GO" id="GO:0010568">
    <property type="term" value="P:regulation of budding cell apical bud growth"/>
    <property type="evidence" value="ECO:0007669"/>
    <property type="project" value="EnsemblFungi"/>
</dbReference>
<dbReference type="GO" id="GO:0051726">
    <property type="term" value="P:regulation of cell cycle"/>
    <property type="evidence" value="ECO:0000316"/>
    <property type="project" value="CGD"/>
</dbReference>
<dbReference type="GO" id="GO:1902275">
    <property type="term" value="P:regulation of chromatin organization"/>
    <property type="evidence" value="ECO:0007669"/>
    <property type="project" value="EnsemblFungi"/>
</dbReference>
<dbReference type="GO" id="GO:0010389">
    <property type="term" value="P:regulation of G2/M transition of mitotic cell cycle"/>
    <property type="evidence" value="ECO:0000318"/>
    <property type="project" value="GO_Central"/>
</dbReference>
<dbReference type="GO" id="GO:0010468">
    <property type="term" value="P:regulation of gene expression"/>
    <property type="evidence" value="ECO:0000318"/>
    <property type="project" value="GO_Central"/>
</dbReference>
<dbReference type="GO" id="GO:1905634">
    <property type="term" value="P:regulation of protein localization to chromatin"/>
    <property type="evidence" value="ECO:0007669"/>
    <property type="project" value="EnsemblFungi"/>
</dbReference>
<dbReference type="GO" id="GO:0090169">
    <property type="term" value="P:regulation of spindle assembly"/>
    <property type="evidence" value="ECO:0007669"/>
    <property type="project" value="EnsemblFungi"/>
</dbReference>
<dbReference type="GO" id="GO:0032210">
    <property type="term" value="P:regulation of telomere maintenance via telomerase"/>
    <property type="evidence" value="ECO:0007669"/>
    <property type="project" value="EnsemblFungi"/>
</dbReference>
<dbReference type="GO" id="GO:0007165">
    <property type="term" value="P:signal transduction"/>
    <property type="evidence" value="ECO:0000318"/>
    <property type="project" value="GO_Central"/>
</dbReference>
<dbReference type="GO" id="GO:0007130">
    <property type="term" value="P:synaptonemal complex assembly"/>
    <property type="evidence" value="ECO:0007669"/>
    <property type="project" value="EnsemblFungi"/>
</dbReference>
<dbReference type="CDD" id="cd07835">
    <property type="entry name" value="STKc_CDK1_CdkB_like"/>
    <property type="match status" value="1"/>
</dbReference>
<dbReference type="FunFam" id="1.10.510.10:FF:000144">
    <property type="entry name" value="Cyclin-dependent kinase 2"/>
    <property type="match status" value="1"/>
</dbReference>
<dbReference type="FunFam" id="3.30.200.20:FF:000027">
    <property type="entry name" value="Putative Cyclin-dependent kinase 1"/>
    <property type="match status" value="1"/>
</dbReference>
<dbReference type="Gene3D" id="3.30.200.20">
    <property type="entry name" value="Phosphorylase Kinase, domain 1"/>
    <property type="match status" value="1"/>
</dbReference>
<dbReference type="Gene3D" id="1.10.510.10">
    <property type="entry name" value="Transferase(Phosphotransferase) domain 1"/>
    <property type="match status" value="1"/>
</dbReference>
<dbReference type="InterPro" id="IPR050108">
    <property type="entry name" value="CDK"/>
</dbReference>
<dbReference type="InterPro" id="IPR011009">
    <property type="entry name" value="Kinase-like_dom_sf"/>
</dbReference>
<dbReference type="InterPro" id="IPR000719">
    <property type="entry name" value="Prot_kinase_dom"/>
</dbReference>
<dbReference type="InterPro" id="IPR017441">
    <property type="entry name" value="Protein_kinase_ATP_BS"/>
</dbReference>
<dbReference type="InterPro" id="IPR008271">
    <property type="entry name" value="Ser/Thr_kinase_AS"/>
</dbReference>
<dbReference type="PANTHER" id="PTHR24056">
    <property type="entry name" value="CELL DIVISION PROTEIN KINASE"/>
    <property type="match status" value="1"/>
</dbReference>
<dbReference type="PANTHER" id="PTHR24056:SF254">
    <property type="entry name" value="CYCLIN-DEPENDENT KINASE 2"/>
    <property type="match status" value="1"/>
</dbReference>
<dbReference type="Pfam" id="PF00069">
    <property type="entry name" value="Pkinase"/>
    <property type="match status" value="1"/>
</dbReference>
<dbReference type="SMART" id="SM00220">
    <property type="entry name" value="S_TKc"/>
    <property type="match status" value="1"/>
</dbReference>
<dbReference type="SUPFAM" id="SSF56112">
    <property type="entry name" value="Protein kinase-like (PK-like)"/>
    <property type="match status" value="1"/>
</dbReference>
<dbReference type="PROSITE" id="PS00107">
    <property type="entry name" value="PROTEIN_KINASE_ATP"/>
    <property type="match status" value="1"/>
</dbReference>
<dbReference type="PROSITE" id="PS50011">
    <property type="entry name" value="PROTEIN_KINASE_DOM"/>
    <property type="match status" value="1"/>
</dbReference>
<dbReference type="PROSITE" id="PS00108">
    <property type="entry name" value="PROTEIN_KINASE_ST"/>
    <property type="match status" value="1"/>
</dbReference>
<sequence>MVELSDYQRQEKVGEGTYGVVYKALDTKHNNRVVALKKIRLESEDEGVPSTAIREISLLKEMKDDNIVRLYDIIHSDSHKLYLVFEFLDLDLKKYMESIPQGVGLGANMIKRFMNQLIRGIKHCHSHRVLHRDLKPQNLLIDKEGNLKLADFGLARAFGVPLRAYTHEVVTLWYRAPEILLGGKQYSTGVDMWSVGCIFAEMCNRKPLFPGDSEIDEIFRIFRILGTPNEEIWPDVNYLPDFKSSFPQWKKKPLSEAVPSLDANGIDLLDQMLVYDPSRRISAKRALIHPYFNDNDDRDHNNYNEDNIGIDKHQNMQ</sequence>
<gene>
    <name evidence="26" type="primary">CDC28</name>
    <name type="synonym">CDK1</name>
    <name type="ordered locus">CAALFM_CR06050WA</name>
    <name type="ORF">CaO19.11337</name>
    <name type="ORF">CaO19.3856</name>
</gene>